<organism>
    <name type="scientific">Clostridium perfringens (strain 13 / Type A)</name>
    <dbReference type="NCBI Taxonomy" id="195102"/>
    <lineage>
        <taxon>Bacteria</taxon>
        <taxon>Bacillati</taxon>
        <taxon>Bacillota</taxon>
        <taxon>Clostridia</taxon>
        <taxon>Eubacteriales</taxon>
        <taxon>Clostridiaceae</taxon>
        <taxon>Clostridium</taxon>
    </lineage>
</organism>
<evidence type="ECO:0000255" key="1">
    <source>
        <dbReference type="HAMAP-Rule" id="MF_00382"/>
    </source>
</evidence>
<evidence type="ECO:0000305" key="2"/>
<proteinExistence type="inferred from homology"/>
<feature type="chain" id="PRO_0000177147" description="Large ribosomal subunit protein bL20">
    <location>
        <begin position="1"/>
        <end position="119"/>
    </location>
</feature>
<gene>
    <name evidence="1" type="primary">rplT</name>
    <name type="ordered locus">CPE1892</name>
</gene>
<sequence length="119" mass="13620">MARVKRAVNARKNHKKVLKLAKGYYGGKSKLFKTANESVIRALRNAYVGRRLKKRDYRRLWIARINAATRMNGLSYSRFMNGMKLAGVDINRKMLSEIAINDPKAFADLVELAKKHLNA</sequence>
<protein>
    <recommendedName>
        <fullName evidence="1">Large ribosomal subunit protein bL20</fullName>
    </recommendedName>
    <alternativeName>
        <fullName evidence="2">50S ribosomal protein L20</fullName>
    </alternativeName>
</protein>
<keyword id="KW-1185">Reference proteome</keyword>
<keyword id="KW-0687">Ribonucleoprotein</keyword>
<keyword id="KW-0689">Ribosomal protein</keyword>
<keyword id="KW-0694">RNA-binding</keyword>
<keyword id="KW-0699">rRNA-binding</keyword>
<dbReference type="EMBL" id="BA000016">
    <property type="protein sequence ID" value="BAB81598.1"/>
    <property type="molecule type" value="Genomic_DNA"/>
</dbReference>
<dbReference type="RefSeq" id="WP_003451332.1">
    <property type="nucleotide sequence ID" value="NC_003366.1"/>
</dbReference>
<dbReference type="SMR" id="Q8XJ69"/>
<dbReference type="STRING" id="195102.gene:10491157"/>
<dbReference type="GeneID" id="93001575"/>
<dbReference type="KEGG" id="cpe:CPE1892"/>
<dbReference type="HOGENOM" id="CLU_123265_0_1_9"/>
<dbReference type="Proteomes" id="UP000000818">
    <property type="component" value="Chromosome"/>
</dbReference>
<dbReference type="GO" id="GO:1990904">
    <property type="term" value="C:ribonucleoprotein complex"/>
    <property type="evidence" value="ECO:0007669"/>
    <property type="project" value="UniProtKB-KW"/>
</dbReference>
<dbReference type="GO" id="GO:0005840">
    <property type="term" value="C:ribosome"/>
    <property type="evidence" value="ECO:0007669"/>
    <property type="project" value="UniProtKB-KW"/>
</dbReference>
<dbReference type="GO" id="GO:0019843">
    <property type="term" value="F:rRNA binding"/>
    <property type="evidence" value="ECO:0007669"/>
    <property type="project" value="UniProtKB-UniRule"/>
</dbReference>
<dbReference type="GO" id="GO:0003735">
    <property type="term" value="F:structural constituent of ribosome"/>
    <property type="evidence" value="ECO:0007669"/>
    <property type="project" value="InterPro"/>
</dbReference>
<dbReference type="GO" id="GO:0000027">
    <property type="term" value="P:ribosomal large subunit assembly"/>
    <property type="evidence" value="ECO:0007669"/>
    <property type="project" value="UniProtKB-UniRule"/>
</dbReference>
<dbReference type="GO" id="GO:0006412">
    <property type="term" value="P:translation"/>
    <property type="evidence" value="ECO:0007669"/>
    <property type="project" value="InterPro"/>
</dbReference>
<dbReference type="CDD" id="cd07026">
    <property type="entry name" value="Ribosomal_L20"/>
    <property type="match status" value="1"/>
</dbReference>
<dbReference type="FunFam" id="1.10.1900.20:FF:000001">
    <property type="entry name" value="50S ribosomal protein L20"/>
    <property type="match status" value="1"/>
</dbReference>
<dbReference type="Gene3D" id="6.10.160.10">
    <property type="match status" value="1"/>
</dbReference>
<dbReference type="Gene3D" id="1.10.1900.20">
    <property type="entry name" value="Ribosomal protein L20"/>
    <property type="match status" value="1"/>
</dbReference>
<dbReference type="HAMAP" id="MF_00382">
    <property type="entry name" value="Ribosomal_bL20"/>
    <property type="match status" value="1"/>
</dbReference>
<dbReference type="InterPro" id="IPR005813">
    <property type="entry name" value="Ribosomal_bL20"/>
</dbReference>
<dbReference type="InterPro" id="IPR049946">
    <property type="entry name" value="RIBOSOMAL_L20_CS"/>
</dbReference>
<dbReference type="InterPro" id="IPR035566">
    <property type="entry name" value="Ribosomal_protein_bL20_C"/>
</dbReference>
<dbReference type="NCBIfam" id="TIGR01032">
    <property type="entry name" value="rplT_bact"/>
    <property type="match status" value="1"/>
</dbReference>
<dbReference type="PANTHER" id="PTHR10986">
    <property type="entry name" value="39S RIBOSOMAL PROTEIN L20"/>
    <property type="match status" value="1"/>
</dbReference>
<dbReference type="Pfam" id="PF00453">
    <property type="entry name" value="Ribosomal_L20"/>
    <property type="match status" value="1"/>
</dbReference>
<dbReference type="PRINTS" id="PR00062">
    <property type="entry name" value="RIBOSOMALL20"/>
</dbReference>
<dbReference type="SUPFAM" id="SSF74731">
    <property type="entry name" value="Ribosomal protein L20"/>
    <property type="match status" value="1"/>
</dbReference>
<dbReference type="PROSITE" id="PS00937">
    <property type="entry name" value="RIBOSOMAL_L20"/>
    <property type="match status" value="1"/>
</dbReference>
<reference key="1">
    <citation type="journal article" date="2002" name="Proc. Natl. Acad. Sci. U.S.A.">
        <title>Complete genome sequence of Clostridium perfringens, an anaerobic flesh-eater.</title>
        <authorList>
            <person name="Shimizu T."/>
            <person name="Ohtani K."/>
            <person name="Hirakawa H."/>
            <person name="Ohshima K."/>
            <person name="Yamashita A."/>
            <person name="Shiba T."/>
            <person name="Ogasawara N."/>
            <person name="Hattori M."/>
            <person name="Kuhara S."/>
            <person name="Hayashi H."/>
        </authorList>
    </citation>
    <scope>NUCLEOTIDE SEQUENCE [LARGE SCALE GENOMIC DNA]</scope>
    <source>
        <strain>13 / Type A</strain>
    </source>
</reference>
<comment type="function">
    <text evidence="1">Binds directly to 23S ribosomal RNA and is necessary for the in vitro assembly process of the 50S ribosomal subunit. It is not involved in the protein synthesizing functions of that subunit.</text>
</comment>
<comment type="similarity">
    <text evidence="1">Belongs to the bacterial ribosomal protein bL20 family.</text>
</comment>
<name>RL20_CLOPE</name>
<accession>Q8XJ69</accession>